<sequence length="84" mass="9063">MAHKKAGGSTRNGRDSESKRLGVKRFGGESVLAGNIIVRQRGTKFHAGVNVGVGRDHTLFALTDGKVKFEVKGPNNRKFISIEA</sequence>
<proteinExistence type="inferred from homology"/>
<accession>Q0HRZ7</accession>
<dbReference type="EMBL" id="CP000444">
    <property type="protein sequence ID" value="ABI44108.1"/>
    <property type="molecule type" value="Genomic_DNA"/>
</dbReference>
<dbReference type="SMR" id="Q0HRZ7"/>
<dbReference type="KEGG" id="shm:Shewmr7_3124"/>
<dbReference type="HOGENOM" id="CLU_095424_4_1_6"/>
<dbReference type="GO" id="GO:0022625">
    <property type="term" value="C:cytosolic large ribosomal subunit"/>
    <property type="evidence" value="ECO:0007669"/>
    <property type="project" value="TreeGrafter"/>
</dbReference>
<dbReference type="GO" id="GO:0003735">
    <property type="term" value="F:structural constituent of ribosome"/>
    <property type="evidence" value="ECO:0007669"/>
    <property type="project" value="InterPro"/>
</dbReference>
<dbReference type="GO" id="GO:0006412">
    <property type="term" value="P:translation"/>
    <property type="evidence" value="ECO:0007669"/>
    <property type="project" value="UniProtKB-UniRule"/>
</dbReference>
<dbReference type="FunFam" id="2.40.50.100:FF:000001">
    <property type="entry name" value="50S ribosomal protein L27"/>
    <property type="match status" value="1"/>
</dbReference>
<dbReference type="Gene3D" id="2.40.50.100">
    <property type="match status" value="1"/>
</dbReference>
<dbReference type="HAMAP" id="MF_00539">
    <property type="entry name" value="Ribosomal_bL27"/>
    <property type="match status" value="1"/>
</dbReference>
<dbReference type="InterPro" id="IPR001684">
    <property type="entry name" value="Ribosomal_bL27"/>
</dbReference>
<dbReference type="InterPro" id="IPR018261">
    <property type="entry name" value="Ribosomal_bL27_CS"/>
</dbReference>
<dbReference type="NCBIfam" id="TIGR00062">
    <property type="entry name" value="L27"/>
    <property type="match status" value="1"/>
</dbReference>
<dbReference type="PANTHER" id="PTHR15893:SF0">
    <property type="entry name" value="LARGE RIBOSOMAL SUBUNIT PROTEIN BL27M"/>
    <property type="match status" value="1"/>
</dbReference>
<dbReference type="PANTHER" id="PTHR15893">
    <property type="entry name" value="RIBOSOMAL PROTEIN L27"/>
    <property type="match status" value="1"/>
</dbReference>
<dbReference type="Pfam" id="PF01016">
    <property type="entry name" value="Ribosomal_L27"/>
    <property type="match status" value="1"/>
</dbReference>
<dbReference type="PRINTS" id="PR00063">
    <property type="entry name" value="RIBOSOMALL27"/>
</dbReference>
<dbReference type="SUPFAM" id="SSF110324">
    <property type="entry name" value="Ribosomal L27 protein-like"/>
    <property type="match status" value="1"/>
</dbReference>
<dbReference type="PROSITE" id="PS00831">
    <property type="entry name" value="RIBOSOMAL_L27"/>
    <property type="match status" value="1"/>
</dbReference>
<keyword id="KW-0687">Ribonucleoprotein</keyword>
<keyword id="KW-0689">Ribosomal protein</keyword>
<comment type="similarity">
    <text evidence="1">Belongs to the bacterial ribosomal protein bL27 family.</text>
</comment>
<evidence type="ECO:0000255" key="1">
    <source>
        <dbReference type="HAMAP-Rule" id="MF_00539"/>
    </source>
</evidence>
<evidence type="ECO:0000256" key="2">
    <source>
        <dbReference type="SAM" id="MobiDB-lite"/>
    </source>
</evidence>
<evidence type="ECO:0000305" key="3"/>
<reference key="1">
    <citation type="submission" date="2006-08" db="EMBL/GenBank/DDBJ databases">
        <title>Complete sequence of chromosome 1 of Shewanella sp. MR-7.</title>
        <authorList>
            <person name="Copeland A."/>
            <person name="Lucas S."/>
            <person name="Lapidus A."/>
            <person name="Barry K."/>
            <person name="Detter J.C."/>
            <person name="Glavina del Rio T."/>
            <person name="Hammon N."/>
            <person name="Israni S."/>
            <person name="Dalin E."/>
            <person name="Tice H."/>
            <person name="Pitluck S."/>
            <person name="Kiss H."/>
            <person name="Brettin T."/>
            <person name="Bruce D."/>
            <person name="Han C."/>
            <person name="Tapia R."/>
            <person name="Gilna P."/>
            <person name="Schmutz J."/>
            <person name="Larimer F."/>
            <person name="Land M."/>
            <person name="Hauser L."/>
            <person name="Kyrpides N."/>
            <person name="Mikhailova N."/>
            <person name="Nealson K."/>
            <person name="Konstantinidis K."/>
            <person name="Klappenbach J."/>
            <person name="Tiedje J."/>
            <person name="Richardson P."/>
        </authorList>
    </citation>
    <scope>NUCLEOTIDE SEQUENCE [LARGE SCALE GENOMIC DNA]</scope>
    <source>
        <strain>MR-7</strain>
    </source>
</reference>
<protein>
    <recommendedName>
        <fullName evidence="1">Large ribosomal subunit protein bL27</fullName>
    </recommendedName>
    <alternativeName>
        <fullName evidence="3">50S ribosomal protein L27</fullName>
    </alternativeName>
</protein>
<organism>
    <name type="scientific">Shewanella sp. (strain MR-7)</name>
    <dbReference type="NCBI Taxonomy" id="60481"/>
    <lineage>
        <taxon>Bacteria</taxon>
        <taxon>Pseudomonadati</taxon>
        <taxon>Pseudomonadota</taxon>
        <taxon>Gammaproteobacteria</taxon>
        <taxon>Alteromonadales</taxon>
        <taxon>Shewanellaceae</taxon>
        <taxon>Shewanella</taxon>
    </lineage>
</organism>
<gene>
    <name evidence="1" type="primary">rpmA</name>
    <name type="ordered locus">Shewmr7_3124</name>
</gene>
<feature type="chain" id="PRO_1000017605" description="Large ribosomal subunit protein bL27">
    <location>
        <begin position="1"/>
        <end position="84"/>
    </location>
</feature>
<feature type="region of interest" description="Disordered" evidence="2">
    <location>
        <begin position="1"/>
        <end position="22"/>
    </location>
</feature>
<name>RL27_SHESR</name>